<dbReference type="EMBL" id="CP001396">
    <property type="protein sequence ID" value="ACR62034.1"/>
    <property type="molecule type" value="Genomic_DNA"/>
</dbReference>
<dbReference type="RefSeq" id="WP_000130305.1">
    <property type="nucleotide sequence ID" value="NC_012759.1"/>
</dbReference>
<dbReference type="SMR" id="C4ZTJ5"/>
<dbReference type="GeneID" id="93777016"/>
<dbReference type="KEGG" id="ebw:BWG_0320"/>
<dbReference type="HOGENOM" id="CLU_014218_8_2_6"/>
<dbReference type="GO" id="GO:0009376">
    <property type="term" value="C:HslUV protease complex"/>
    <property type="evidence" value="ECO:0007669"/>
    <property type="project" value="TreeGrafter"/>
</dbReference>
<dbReference type="GO" id="GO:0005524">
    <property type="term" value="F:ATP binding"/>
    <property type="evidence" value="ECO:0007669"/>
    <property type="project" value="UniProtKB-UniRule"/>
</dbReference>
<dbReference type="GO" id="GO:0016887">
    <property type="term" value="F:ATP hydrolysis activity"/>
    <property type="evidence" value="ECO:0007669"/>
    <property type="project" value="InterPro"/>
</dbReference>
<dbReference type="GO" id="GO:0140662">
    <property type="term" value="F:ATP-dependent protein folding chaperone"/>
    <property type="evidence" value="ECO:0007669"/>
    <property type="project" value="InterPro"/>
</dbReference>
<dbReference type="GO" id="GO:0046983">
    <property type="term" value="F:protein dimerization activity"/>
    <property type="evidence" value="ECO:0007669"/>
    <property type="project" value="InterPro"/>
</dbReference>
<dbReference type="GO" id="GO:0051082">
    <property type="term" value="F:unfolded protein binding"/>
    <property type="evidence" value="ECO:0007669"/>
    <property type="project" value="UniProtKB-UniRule"/>
</dbReference>
<dbReference type="GO" id="GO:0008270">
    <property type="term" value="F:zinc ion binding"/>
    <property type="evidence" value="ECO:0007669"/>
    <property type="project" value="InterPro"/>
</dbReference>
<dbReference type="GO" id="GO:0051301">
    <property type="term" value="P:cell division"/>
    <property type="evidence" value="ECO:0007669"/>
    <property type="project" value="TreeGrafter"/>
</dbReference>
<dbReference type="GO" id="GO:0051603">
    <property type="term" value="P:proteolysis involved in protein catabolic process"/>
    <property type="evidence" value="ECO:0007669"/>
    <property type="project" value="TreeGrafter"/>
</dbReference>
<dbReference type="CDD" id="cd19497">
    <property type="entry name" value="RecA-like_ClpX"/>
    <property type="match status" value="1"/>
</dbReference>
<dbReference type="FunFam" id="1.10.8.60:FF:000002">
    <property type="entry name" value="ATP-dependent Clp protease ATP-binding subunit ClpX"/>
    <property type="match status" value="1"/>
</dbReference>
<dbReference type="FunFam" id="3.40.50.300:FF:000005">
    <property type="entry name" value="ATP-dependent Clp protease ATP-binding subunit ClpX"/>
    <property type="match status" value="1"/>
</dbReference>
<dbReference type="Gene3D" id="1.10.8.60">
    <property type="match status" value="1"/>
</dbReference>
<dbReference type="Gene3D" id="6.20.220.10">
    <property type="entry name" value="ClpX chaperone, C4-type zinc finger domain"/>
    <property type="match status" value="1"/>
</dbReference>
<dbReference type="Gene3D" id="3.40.50.300">
    <property type="entry name" value="P-loop containing nucleotide triphosphate hydrolases"/>
    <property type="match status" value="1"/>
</dbReference>
<dbReference type="HAMAP" id="MF_00175">
    <property type="entry name" value="ClpX"/>
    <property type="match status" value="1"/>
</dbReference>
<dbReference type="InterPro" id="IPR003593">
    <property type="entry name" value="AAA+_ATPase"/>
</dbReference>
<dbReference type="InterPro" id="IPR050052">
    <property type="entry name" value="ATP-dep_Clp_protease_ClpX"/>
</dbReference>
<dbReference type="InterPro" id="IPR003959">
    <property type="entry name" value="ATPase_AAA_core"/>
</dbReference>
<dbReference type="InterPro" id="IPR019489">
    <property type="entry name" value="Clp_ATPase_C"/>
</dbReference>
<dbReference type="InterPro" id="IPR004487">
    <property type="entry name" value="Clp_protease_ATP-bd_su_ClpX"/>
</dbReference>
<dbReference type="InterPro" id="IPR046425">
    <property type="entry name" value="ClpX_bact"/>
</dbReference>
<dbReference type="InterPro" id="IPR027417">
    <property type="entry name" value="P-loop_NTPase"/>
</dbReference>
<dbReference type="InterPro" id="IPR010603">
    <property type="entry name" value="Znf_CppX_C4"/>
</dbReference>
<dbReference type="InterPro" id="IPR038366">
    <property type="entry name" value="Znf_CppX_C4_sf"/>
</dbReference>
<dbReference type="NCBIfam" id="TIGR00382">
    <property type="entry name" value="clpX"/>
    <property type="match status" value="1"/>
</dbReference>
<dbReference type="NCBIfam" id="NF003745">
    <property type="entry name" value="PRK05342.1"/>
    <property type="match status" value="1"/>
</dbReference>
<dbReference type="PANTHER" id="PTHR48102:SF7">
    <property type="entry name" value="ATP-DEPENDENT CLP PROTEASE ATP-BINDING SUBUNIT CLPX-LIKE, MITOCHONDRIAL"/>
    <property type="match status" value="1"/>
</dbReference>
<dbReference type="PANTHER" id="PTHR48102">
    <property type="entry name" value="ATP-DEPENDENT CLP PROTEASE ATP-BINDING SUBUNIT CLPX-LIKE, MITOCHONDRIAL-RELATED"/>
    <property type="match status" value="1"/>
</dbReference>
<dbReference type="Pfam" id="PF07724">
    <property type="entry name" value="AAA_2"/>
    <property type="match status" value="1"/>
</dbReference>
<dbReference type="Pfam" id="PF10431">
    <property type="entry name" value="ClpB_D2-small"/>
    <property type="match status" value="1"/>
</dbReference>
<dbReference type="Pfam" id="PF06689">
    <property type="entry name" value="zf-C4_ClpX"/>
    <property type="match status" value="1"/>
</dbReference>
<dbReference type="SMART" id="SM00382">
    <property type="entry name" value="AAA"/>
    <property type="match status" value="1"/>
</dbReference>
<dbReference type="SMART" id="SM01086">
    <property type="entry name" value="ClpB_D2-small"/>
    <property type="match status" value="1"/>
</dbReference>
<dbReference type="SMART" id="SM00994">
    <property type="entry name" value="zf-C4_ClpX"/>
    <property type="match status" value="1"/>
</dbReference>
<dbReference type="SUPFAM" id="SSF57716">
    <property type="entry name" value="Glucocorticoid receptor-like (DNA-binding domain)"/>
    <property type="match status" value="1"/>
</dbReference>
<dbReference type="SUPFAM" id="SSF52540">
    <property type="entry name" value="P-loop containing nucleoside triphosphate hydrolases"/>
    <property type="match status" value="1"/>
</dbReference>
<dbReference type="PROSITE" id="PS51902">
    <property type="entry name" value="CLPX_ZB"/>
    <property type="match status" value="1"/>
</dbReference>
<evidence type="ECO:0000255" key="1">
    <source>
        <dbReference type="HAMAP-Rule" id="MF_00175"/>
    </source>
</evidence>
<evidence type="ECO:0000255" key="2">
    <source>
        <dbReference type="PROSITE-ProRule" id="PRU01250"/>
    </source>
</evidence>
<comment type="function">
    <text evidence="1">ATP-dependent specificity component of the Clp protease. It directs the protease to specific substrates. Can perform chaperone functions in the absence of ClpP.</text>
</comment>
<comment type="subunit">
    <text evidence="1">Component of the ClpX-ClpP complex. Forms a hexameric ring that, in the presence of ATP, binds to fourteen ClpP subunits assembled into a disk-like structure with a central cavity, resembling the structure of eukaryotic proteasomes.</text>
</comment>
<comment type="similarity">
    <text evidence="1">Belongs to the ClpX chaperone family.</text>
</comment>
<accession>C4ZTJ5</accession>
<keyword id="KW-0067">ATP-binding</keyword>
<keyword id="KW-0143">Chaperone</keyword>
<keyword id="KW-0479">Metal-binding</keyword>
<keyword id="KW-0547">Nucleotide-binding</keyword>
<keyword id="KW-0862">Zinc</keyword>
<proteinExistence type="inferred from homology"/>
<reference key="1">
    <citation type="journal article" date="2009" name="J. Bacteriol.">
        <title>Genomic sequencing reveals regulatory mutations and recombinational events in the widely used MC4100 lineage of Escherichia coli K-12.</title>
        <authorList>
            <person name="Ferenci T."/>
            <person name="Zhou Z."/>
            <person name="Betteridge T."/>
            <person name="Ren Y."/>
            <person name="Liu Y."/>
            <person name="Feng L."/>
            <person name="Reeves P.R."/>
            <person name="Wang L."/>
        </authorList>
    </citation>
    <scope>NUCLEOTIDE SEQUENCE [LARGE SCALE GENOMIC DNA]</scope>
    <source>
        <strain>K12 / MC4100 / BW2952</strain>
    </source>
</reference>
<name>CLPX_ECOBW</name>
<feature type="chain" id="PRO_1000203730" description="ATP-dependent Clp protease ATP-binding subunit ClpX">
    <location>
        <begin position="1"/>
        <end position="424"/>
    </location>
</feature>
<feature type="domain" description="ClpX-type ZB" evidence="2">
    <location>
        <begin position="2"/>
        <end position="56"/>
    </location>
</feature>
<feature type="binding site" evidence="2">
    <location>
        <position position="15"/>
    </location>
    <ligand>
        <name>Zn(2+)</name>
        <dbReference type="ChEBI" id="CHEBI:29105"/>
    </ligand>
</feature>
<feature type="binding site" evidence="2">
    <location>
        <position position="18"/>
    </location>
    <ligand>
        <name>Zn(2+)</name>
        <dbReference type="ChEBI" id="CHEBI:29105"/>
    </ligand>
</feature>
<feature type="binding site" evidence="2">
    <location>
        <position position="37"/>
    </location>
    <ligand>
        <name>Zn(2+)</name>
        <dbReference type="ChEBI" id="CHEBI:29105"/>
    </ligand>
</feature>
<feature type="binding site" evidence="2">
    <location>
        <position position="40"/>
    </location>
    <ligand>
        <name>Zn(2+)</name>
        <dbReference type="ChEBI" id="CHEBI:29105"/>
    </ligand>
</feature>
<feature type="binding site" evidence="1">
    <location>
        <begin position="120"/>
        <end position="127"/>
    </location>
    <ligand>
        <name>ATP</name>
        <dbReference type="ChEBI" id="CHEBI:30616"/>
    </ligand>
</feature>
<protein>
    <recommendedName>
        <fullName evidence="1">ATP-dependent Clp protease ATP-binding subunit ClpX</fullName>
    </recommendedName>
</protein>
<organism>
    <name type="scientific">Escherichia coli (strain K12 / MC4100 / BW2952)</name>
    <dbReference type="NCBI Taxonomy" id="595496"/>
    <lineage>
        <taxon>Bacteria</taxon>
        <taxon>Pseudomonadati</taxon>
        <taxon>Pseudomonadota</taxon>
        <taxon>Gammaproteobacteria</taxon>
        <taxon>Enterobacterales</taxon>
        <taxon>Enterobacteriaceae</taxon>
        <taxon>Escherichia</taxon>
    </lineage>
</organism>
<sequence length="424" mass="46356">MTDKRKDGSGKLLYCSFCGKSQHEVRKLIAGPSVYICDECVDLCNDIIREEIKEVAPHRERSALPTPHEIRNHLDDYVIGQEQAKKVLAVAVYNHYKRLRNGDTSNGVELGKSNILLIGPTGSGKTLLAETLARLLDVPFTMADATTLTEAGYVGEDVENIIQKLLQKCDYDVQKAQRGIVYIDEIDKISRKSDNPSITRDVSGEGVQQALLKLIEGTVAAVPPQGGRKHPQQEFLQVDTSKILFICGGAFAGLDKVISHRVETGSGIGFGATVKAKSDKASEGELLAQVEPEDLIKFGLIPEFIGRLPVVATLNELSEEALIQILKEPKNALTKQYQALFNLEGVDLEFRDEALDAIAKKAMARKTGARGLRSIVEAALLDTMYDLPSMEDVEKVVIDESVIDGQSKPLLIYGKPEAQQASGE</sequence>
<gene>
    <name evidence="1" type="primary">clpX</name>
    <name type="ordered locus">BWG_0320</name>
</gene>